<sequence length="306" mass="34835">MKVLWAVLVVTLLAGCQADVEPALEVGEPAPEVREPAMWQSGQPWELALGRFWDYLRWVQTLSDQVQEELLSSQVTQELTVLMEDTMKEVKAYKSELEQELGPMAEDTKARLSKELQAAQARLGADMEEVRNRLTQYRSEVQTMLGQSAEELRARLASHLRKLRKRLLRDAEDLQKRLAVYKAGAQEGAERGVSAIRERLGSLVEQGRLRAAQTSQPLRERAQAWGERLRGRLEEVGGQARDRLDVVREQMEEVRAKVEEQAEAFQARLKGWFEPVVEDMRRQWAELIEKVQVAVGASTPAPSEKH</sequence>
<accession>P0DUZ1</accession>
<comment type="function">
    <text evidence="1">APOE is an apolipoprotein, a protein associating with lipid particles, that mainly functions in lipoprotein-mediated lipid transport between organs via the plasma and interstitial fluids. APOE is a core component of plasma lipoproteins and is involved in their production, conversion and clearance. Apolipoproteins are amphipathic molecules that interact both with lipids of the lipoprotein particle core and the aqueous environment of the plasma. As such, APOE associates with chylomicrons, chylomicron remnants, very low density lipoproteins (VLDL) and intermediate density lipoproteins (IDL) but shows a preferential binding to high-density lipoproteins (HDL). It also binds a wide range of cellular receptors including the LDL receptor/LDLR, the LDL receptor-related proteins LRP1, LRP2 and LRP8 and the very low-density lipoprotein receptor/VLDLR that mediate the cellular uptake of the APOE-containing lipoprotein particles. Finally, APOE also has a heparin-binding activity and binds heparan-sulfate proteoglycans on the surface of cells, a property that supports the capture and the receptor-mediated uptake of APOE-containing lipoproteins by cells. A main function of APOE is to mediate lipoprotein clearance through the uptake of chylomicrons, VLDLs, and HDLs by hepatocytes. APOE is also involved in the biosynthesis by the liver of VLDLs as well as their uptake by peripheral tissues ensuring the delivery of triglycerides and energy storage in muscle, heart and adipose tissues. By participating in the lipoprotein-mediated distribution of lipids among tissues, APOE plays a critical role in plasma and tissues lipid homeostasis. APOE is also involved in two steps of reverse cholesterol transport, the HDLs-mediated transport of cholesterol from peripheral tissues to the liver, and thereby plays an important role in cholesterol homeostasis. First, it is functionally associated with ABCA1 in the biogenesis of HDLs in tissues. Second, it is enriched in circulating HDLs and mediates their uptake by hepatocytes. APOE also plays an important role in lipid transport in the central nervous system, regulating neuron survival and sprouting.</text>
</comment>
<comment type="subunit">
    <text evidence="1">Homotetramer. May interact with ABCA1; functionally associated with ABCA1 in the biogenesis of HDLs. May interact with APP/A4 amyloid-beta peptide; the interaction is extremely stable in vitro but its physiological significance is unclear. May interact with MAPT. May interact with MAP2. In the cerebrospinal fluid, interacts with secreted SORL1. Interacts with PMEL; this allows the loading of PMEL luminal fragment on ILVs to induce fibril nucleation.</text>
</comment>
<comment type="subcellular location">
    <subcellularLocation>
        <location evidence="1">Secreted</location>
    </subcellularLocation>
    <subcellularLocation>
        <location evidence="1">Secreted</location>
        <location evidence="1">Extracellular space</location>
    </subcellularLocation>
    <subcellularLocation>
        <location evidence="1">Secreted</location>
        <location evidence="1">Extracellular space</location>
        <location evidence="1">Extracellular matrix</location>
    </subcellularLocation>
    <subcellularLocation>
        <location evidence="1">Extracellular vesicle</location>
    </subcellularLocation>
    <subcellularLocation>
        <location evidence="1">Endosome</location>
        <location evidence="1">Multivesicular body</location>
    </subcellularLocation>
    <text evidence="1">In the plasma, APOE is associated with chylomicrons, chylomicrons remnants, VLDL, LDL and HDL lipoproteins. Lipid poor oligomeric APOE is associated with the extracellular matrix in a calcium- and heparan-sulfate proteoglycans-dependent manner. Lipidation induces the release from the extracellular matrix. Colocalizes with CD63 and PMEL at exosomes and in intraluminal vesicles within multivesicular endosomes.</text>
</comment>
<comment type="PTM">
    <text evidence="1">APOE exists as multiple glycosylated and sialylated glycoforms within cells and in plasma. The extent of glycosylation and sialylation are tissue and context specific.</text>
</comment>
<comment type="PTM">
    <text evidence="1">Glycated in plasma VLDL.</text>
</comment>
<comment type="PTM">
    <text evidence="1">Phosphorylated by FAM20C in the extracellular medium.</text>
</comment>
<comment type="similarity">
    <text evidence="4">Belongs to the apolipoprotein A1/A4/E family.</text>
</comment>
<dbReference type="EMBL" id="QZML01001391">
    <property type="status" value="NOT_ANNOTATED_CDS"/>
    <property type="molecule type" value="Genomic_DNA"/>
</dbReference>
<dbReference type="SMR" id="P0DUZ1"/>
<dbReference type="GO" id="GO:0042627">
    <property type="term" value="C:chylomicron"/>
    <property type="evidence" value="ECO:0007669"/>
    <property type="project" value="UniProtKB-KW"/>
</dbReference>
<dbReference type="GO" id="GO:0070062">
    <property type="term" value="C:extracellular exosome"/>
    <property type="evidence" value="ECO:0000250"/>
    <property type="project" value="UniProtKB"/>
</dbReference>
<dbReference type="GO" id="GO:0034364">
    <property type="term" value="C:high-density lipoprotein particle"/>
    <property type="evidence" value="ECO:0007669"/>
    <property type="project" value="UniProtKB-KW"/>
</dbReference>
<dbReference type="GO" id="GO:0034362">
    <property type="term" value="C:low-density lipoprotein particle"/>
    <property type="evidence" value="ECO:0007669"/>
    <property type="project" value="TreeGrafter"/>
</dbReference>
<dbReference type="GO" id="GO:0097487">
    <property type="term" value="C:multivesicular body, internal vesicle"/>
    <property type="evidence" value="ECO:0000250"/>
    <property type="project" value="UniProtKB"/>
</dbReference>
<dbReference type="GO" id="GO:0034361">
    <property type="term" value="C:very-low-density lipoprotein particle"/>
    <property type="evidence" value="ECO:0007669"/>
    <property type="project" value="UniProtKB-KW"/>
</dbReference>
<dbReference type="GO" id="GO:0120020">
    <property type="term" value="F:cholesterol transfer activity"/>
    <property type="evidence" value="ECO:0007669"/>
    <property type="project" value="TreeGrafter"/>
</dbReference>
<dbReference type="GO" id="GO:0008201">
    <property type="term" value="F:heparin binding"/>
    <property type="evidence" value="ECO:0007669"/>
    <property type="project" value="UniProtKB-KW"/>
</dbReference>
<dbReference type="GO" id="GO:0060228">
    <property type="term" value="F:phosphatidylcholine-sterol O-acyltransferase activator activity"/>
    <property type="evidence" value="ECO:0007669"/>
    <property type="project" value="TreeGrafter"/>
</dbReference>
<dbReference type="GO" id="GO:0005543">
    <property type="term" value="F:phospholipid binding"/>
    <property type="evidence" value="ECO:0007669"/>
    <property type="project" value="TreeGrafter"/>
</dbReference>
<dbReference type="GO" id="GO:0055090">
    <property type="term" value="P:acylglycerol homeostasis"/>
    <property type="evidence" value="ECO:0007669"/>
    <property type="project" value="TreeGrafter"/>
</dbReference>
<dbReference type="GO" id="GO:0033344">
    <property type="term" value="P:cholesterol efflux"/>
    <property type="evidence" value="ECO:0007669"/>
    <property type="project" value="TreeGrafter"/>
</dbReference>
<dbReference type="GO" id="GO:0008203">
    <property type="term" value="P:cholesterol metabolic process"/>
    <property type="evidence" value="ECO:0007669"/>
    <property type="project" value="TreeGrafter"/>
</dbReference>
<dbReference type="GO" id="GO:0042157">
    <property type="term" value="P:lipoprotein metabolic process"/>
    <property type="evidence" value="ECO:0007669"/>
    <property type="project" value="InterPro"/>
</dbReference>
<dbReference type="GO" id="GO:0032438">
    <property type="term" value="P:melanosome organization"/>
    <property type="evidence" value="ECO:0000250"/>
    <property type="project" value="UniProtKB"/>
</dbReference>
<dbReference type="GO" id="GO:0033700">
    <property type="term" value="P:phospholipid efflux"/>
    <property type="evidence" value="ECO:0007669"/>
    <property type="project" value="TreeGrafter"/>
</dbReference>
<dbReference type="FunFam" id="1.20.120.20:FF:000002">
    <property type="entry name" value="Apolipoprotein E"/>
    <property type="match status" value="1"/>
</dbReference>
<dbReference type="FunFam" id="1.20.120.20:FF:000003">
    <property type="entry name" value="Apolipoprotein E"/>
    <property type="match status" value="1"/>
</dbReference>
<dbReference type="Gene3D" id="1.20.120.20">
    <property type="entry name" value="Apolipoprotein"/>
    <property type="match status" value="2"/>
</dbReference>
<dbReference type="InterPro" id="IPR000074">
    <property type="entry name" value="ApoA_E"/>
</dbReference>
<dbReference type="InterPro" id="IPR050163">
    <property type="entry name" value="Apolipoprotein_A1/A4/E"/>
</dbReference>
<dbReference type="PANTHER" id="PTHR18976">
    <property type="entry name" value="APOLIPOPROTEIN"/>
    <property type="match status" value="1"/>
</dbReference>
<dbReference type="PANTHER" id="PTHR18976:SF2">
    <property type="entry name" value="APOLIPOPROTEIN E"/>
    <property type="match status" value="1"/>
</dbReference>
<dbReference type="Pfam" id="PF01442">
    <property type="entry name" value="Apolipoprotein"/>
    <property type="match status" value="1"/>
</dbReference>
<dbReference type="SUPFAM" id="SSF58113">
    <property type="entry name" value="Apolipoprotein A-I"/>
    <property type="match status" value="1"/>
</dbReference>
<evidence type="ECO:0000250" key="1">
    <source>
        <dbReference type="UniProtKB" id="P02649"/>
    </source>
</evidence>
<evidence type="ECO:0000250" key="2">
    <source>
        <dbReference type="UniProtKB" id="P08226"/>
    </source>
</evidence>
<evidence type="ECO:0000255" key="3"/>
<evidence type="ECO:0000305" key="4"/>
<gene>
    <name type="primary">APOE</name>
</gene>
<reference key="1">
    <citation type="journal article" date="2021" name="Sci. China Life Sci.">
        <title>Genome-wide signatures of mammalian skin covering evolution.</title>
        <authorList>
            <person name="Cao P."/>
            <person name="Dai Q."/>
            <person name="Deng C."/>
            <person name="Zhao X."/>
            <person name="Qin S."/>
            <person name="Yang J."/>
            <person name="Ju R."/>
            <person name="Wang Z."/>
            <person name="Lu G."/>
            <person name="Gu X."/>
            <person name="Yang Z."/>
            <person name="Zhu L."/>
        </authorList>
    </citation>
    <scope>NUCLEOTIDE SEQUENCE [LARGE SCALE GENOMIC DNA]</scope>
    <source>
        <tissue>Muscle</tissue>
    </source>
</reference>
<protein>
    <recommendedName>
        <fullName>Apolipoprotein E</fullName>
        <shortName>Apo-E</shortName>
    </recommendedName>
</protein>
<proteinExistence type="inferred from homology"/>
<feature type="signal peptide" evidence="3">
    <location>
        <begin position="1"/>
        <end position="18"/>
    </location>
</feature>
<feature type="chain" id="PRO_0000454015" description="Apolipoprotein E">
    <location>
        <begin position="19"/>
        <end position="306"/>
    </location>
</feature>
<feature type="repeat" description="1">
    <location>
        <begin position="81"/>
        <end position="102"/>
    </location>
</feature>
<feature type="repeat" description="2">
    <location>
        <begin position="103"/>
        <end position="124"/>
    </location>
</feature>
<feature type="repeat" description="3">
    <location>
        <begin position="125"/>
        <end position="146"/>
    </location>
</feature>
<feature type="repeat" description="4">
    <location>
        <begin position="147"/>
        <end position="168"/>
    </location>
</feature>
<feature type="repeat" description="5">
    <location>
        <begin position="169"/>
        <end position="190"/>
    </location>
</feature>
<feature type="repeat" description="6">
    <location>
        <begin position="191"/>
        <end position="212"/>
    </location>
</feature>
<feature type="repeat" description="7">
    <location>
        <begin position="213"/>
        <end position="230"/>
    </location>
</feature>
<feature type="repeat" description="8">
    <location>
        <begin position="231"/>
        <end position="252"/>
    </location>
</feature>
<feature type="region of interest" description="8 X 22 AA approximate tandem repeats">
    <location>
        <begin position="81"/>
        <end position="252"/>
    </location>
</feature>
<feature type="region of interest" description="LDL and other lipoprotein receptors binding" evidence="1">
    <location>
        <begin position="159"/>
        <end position="169"/>
    </location>
</feature>
<feature type="region of interest" description="Lipid-binding and lipoprotein association" evidence="1">
    <location>
        <begin position="211"/>
        <end position="280"/>
    </location>
</feature>
<feature type="region of interest" description="Specificity for association with VLDL" evidence="1">
    <location>
        <begin position="268"/>
        <end position="280"/>
    </location>
</feature>
<feature type="binding site" evidence="1">
    <location>
        <begin position="163"/>
        <end position="166"/>
    </location>
    <ligand>
        <name>heparin</name>
        <dbReference type="ChEBI" id="CHEBI:28304"/>
    </ligand>
</feature>
<feature type="binding site" evidence="1">
    <location>
        <begin position="226"/>
        <end position="233"/>
    </location>
    <ligand>
        <name>heparin</name>
        <dbReference type="ChEBI" id="CHEBI:28304"/>
    </ligand>
</feature>
<feature type="modified residue" description="Methionine sulfoxide" evidence="2">
    <location>
        <position position="144"/>
    </location>
</feature>
<feature type="modified residue" description="Phosphoserine" evidence="1">
    <location>
        <position position="148"/>
    </location>
</feature>
<organism>
    <name type="scientific">Hystrix brachyura</name>
    <name type="common">Malayan porcupine</name>
    <dbReference type="NCBI Taxonomy" id="143286"/>
    <lineage>
        <taxon>Eukaryota</taxon>
        <taxon>Metazoa</taxon>
        <taxon>Chordata</taxon>
        <taxon>Craniata</taxon>
        <taxon>Vertebrata</taxon>
        <taxon>Euteleostomi</taxon>
        <taxon>Mammalia</taxon>
        <taxon>Eutheria</taxon>
        <taxon>Euarchontoglires</taxon>
        <taxon>Glires</taxon>
        <taxon>Rodentia</taxon>
        <taxon>Hystricomorpha</taxon>
        <taxon>Hystricidae</taxon>
        <taxon>Hystrix</taxon>
    </lineage>
</organism>
<name>APOE_HYSBR</name>
<keyword id="KW-0162">Chylomicron</keyword>
<keyword id="KW-0967">Endosome</keyword>
<keyword id="KW-0272">Extracellular matrix</keyword>
<keyword id="KW-0325">Glycoprotein</keyword>
<keyword id="KW-0345">HDL</keyword>
<keyword id="KW-0358">Heparin-binding</keyword>
<keyword id="KW-0445">Lipid transport</keyword>
<keyword id="KW-0446">Lipid-binding</keyword>
<keyword id="KW-0558">Oxidation</keyword>
<keyword id="KW-0597">Phosphoprotein</keyword>
<keyword id="KW-0677">Repeat</keyword>
<keyword id="KW-0964">Secreted</keyword>
<keyword id="KW-0732">Signal</keyword>
<keyword id="KW-0813">Transport</keyword>
<keyword id="KW-0850">VLDL</keyword>